<keyword id="KW-1185">Reference proteome</keyword>
<keyword id="KW-0687">Ribonucleoprotein</keyword>
<keyword id="KW-0689">Ribosomal protein</keyword>
<dbReference type="EMBL" id="CP000016">
    <property type="protein sequence ID" value="AAZ40831.1"/>
    <property type="molecule type" value="Genomic_DNA"/>
</dbReference>
<dbReference type="RefSeq" id="WP_011282738.1">
    <property type="nucleotide sequence ID" value="NC_007292.1"/>
</dbReference>
<dbReference type="SMR" id="Q493K9"/>
<dbReference type="STRING" id="291272.BPEN_197"/>
<dbReference type="KEGG" id="bpn:BPEN_197"/>
<dbReference type="eggNOG" id="COG0051">
    <property type="taxonomic scope" value="Bacteria"/>
</dbReference>
<dbReference type="HOGENOM" id="CLU_122625_1_3_6"/>
<dbReference type="OrthoDB" id="9804464at2"/>
<dbReference type="Proteomes" id="UP000007794">
    <property type="component" value="Chromosome"/>
</dbReference>
<dbReference type="GO" id="GO:1990904">
    <property type="term" value="C:ribonucleoprotein complex"/>
    <property type="evidence" value="ECO:0007669"/>
    <property type="project" value="UniProtKB-KW"/>
</dbReference>
<dbReference type="GO" id="GO:0005840">
    <property type="term" value="C:ribosome"/>
    <property type="evidence" value="ECO:0007669"/>
    <property type="project" value="UniProtKB-KW"/>
</dbReference>
<dbReference type="GO" id="GO:0003735">
    <property type="term" value="F:structural constituent of ribosome"/>
    <property type="evidence" value="ECO:0007669"/>
    <property type="project" value="InterPro"/>
</dbReference>
<dbReference type="GO" id="GO:0000049">
    <property type="term" value="F:tRNA binding"/>
    <property type="evidence" value="ECO:0007669"/>
    <property type="project" value="UniProtKB-UniRule"/>
</dbReference>
<dbReference type="GO" id="GO:0006412">
    <property type="term" value="P:translation"/>
    <property type="evidence" value="ECO:0007669"/>
    <property type="project" value="UniProtKB-UniRule"/>
</dbReference>
<dbReference type="FunFam" id="3.30.70.600:FF:000001">
    <property type="entry name" value="30S ribosomal protein S10"/>
    <property type="match status" value="1"/>
</dbReference>
<dbReference type="Gene3D" id="3.30.70.600">
    <property type="entry name" value="Ribosomal protein S10 domain"/>
    <property type="match status" value="1"/>
</dbReference>
<dbReference type="HAMAP" id="MF_00508">
    <property type="entry name" value="Ribosomal_uS10"/>
    <property type="match status" value="1"/>
</dbReference>
<dbReference type="InterPro" id="IPR001848">
    <property type="entry name" value="Ribosomal_uS10"/>
</dbReference>
<dbReference type="InterPro" id="IPR018268">
    <property type="entry name" value="Ribosomal_uS10_CS"/>
</dbReference>
<dbReference type="InterPro" id="IPR027486">
    <property type="entry name" value="Ribosomal_uS10_dom"/>
</dbReference>
<dbReference type="InterPro" id="IPR036838">
    <property type="entry name" value="Ribosomal_uS10_dom_sf"/>
</dbReference>
<dbReference type="NCBIfam" id="NF001861">
    <property type="entry name" value="PRK00596.1"/>
    <property type="match status" value="1"/>
</dbReference>
<dbReference type="NCBIfam" id="TIGR01049">
    <property type="entry name" value="rpsJ_bact"/>
    <property type="match status" value="1"/>
</dbReference>
<dbReference type="PANTHER" id="PTHR11700">
    <property type="entry name" value="30S RIBOSOMAL PROTEIN S10 FAMILY MEMBER"/>
    <property type="match status" value="1"/>
</dbReference>
<dbReference type="Pfam" id="PF00338">
    <property type="entry name" value="Ribosomal_S10"/>
    <property type="match status" value="1"/>
</dbReference>
<dbReference type="PRINTS" id="PR00971">
    <property type="entry name" value="RIBOSOMALS10"/>
</dbReference>
<dbReference type="SMART" id="SM01403">
    <property type="entry name" value="Ribosomal_S10"/>
    <property type="match status" value="1"/>
</dbReference>
<dbReference type="SUPFAM" id="SSF54999">
    <property type="entry name" value="Ribosomal protein S10"/>
    <property type="match status" value="1"/>
</dbReference>
<dbReference type="PROSITE" id="PS00361">
    <property type="entry name" value="RIBOSOMAL_S10"/>
    <property type="match status" value="1"/>
</dbReference>
<sequence>MQNQRIRIRLKAFDHRLIDKSTVEIVETAKRTGAQVRGPIPLPTRKERFTVLISPHVNKDARDQYEIRTHKRLIDIVEPTDKTVDALMRLDLAAGVDVQISLG</sequence>
<name>RS10_BLOPB</name>
<accession>Q493K9</accession>
<protein>
    <recommendedName>
        <fullName evidence="1">Small ribosomal subunit protein uS10</fullName>
    </recommendedName>
    <alternativeName>
        <fullName evidence="2">30S ribosomal protein S10</fullName>
    </alternativeName>
</protein>
<comment type="function">
    <text evidence="1">Involved in the binding of tRNA to the ribosomes.</text>
</comment>
<comment type="subunit">
    <text evidence="1">Part of the 30S ribosomal subunit.</text>
</comment>
<comment type="similarity">
    <text evidence="1">Belongs to the universal ribosomal protein uS10 family.</text>
</comment>
<evidence type="ECO:0000255" key="1">
    <source>
        <dbReference type="HAMAP-Rule" id="MF_00508"/>
    </source>
</evidence>
<evidence type="ECO:0000305" key="2"/>
<reference key="1">
    <citation type="journal article" date="2005" name="Genome Res.">
        <title>Genome sequence of Blochmannia pennsylvanicus indicates parallel evolutionary trends among bacterial mutualists of insects.</title>
        <authorList>
            <person name="Degnan P.H."/>
            <person name="Lazarus A.B."/>
            <person name="Wernegreen J.J."/>
        </authorList>
    </citation>
    <scope>NUCLEOTIDE SEQUENCE [LARGE SCALE GENOMIC DNA]</scope>
    <source>
        <strain>BPEN</strain>
    </source>
</reference>
<organism>
    <name type="scientific">Blochmanniella pennsylvanica (strain BPEN)</name>
    <dbReference type="NCBI Taxonomy" id="291272"/>
    <lineage>
        <taxon>Bacteria</taxon>
        <taxon>Pseudomonadati</taxon>
        <taxon>Pseudomonadota</taxon>
        <taxon>Gammaproteobacteria</taxon>
        <taxon>Enterobacterales</taxon>
        <taxon>Enterobacteriaceae</taxon>
        <taxon>ant endosymbionts</taxon>
        <taxon>Candidatus Blochmanniella</taxon>
    </lineage>
</organism>
<feature type="chain" id="PRO_0000237018" description="Small ribosomal subunit protein uS10">
    <location>
        <begin position="1"/>
        <end position="103"/>
    </location>
</feature>
<proteinExistence type="inferred from homology"/>
<gene>
    <name evidence="1" type="primary">rpsJ</name>
    <name type="ordered locus">BPEN_197</name>
</gene>